<reference key="1">
    <citation type="journal article" date="1987" name="J. Bacteriol.">
        <title>Sequence of the Ampullariella sp. strain 3876 gene coding for xylose isomerase.</title>
        <authorList>
            <person name="Saari G.C."/>
            <person name="Kumar A.A."/>
            <person name="Kawasaki G.H."/>
            <person name="Insley M.Y."/>
            <person name="O'Hara P.J."/>
        </authorList>
    </citation>
    <scope>NUCLEOTIDE SEQUENCE [GENOMIC DNA]</scope>
</reference>
<accession>P10654</accession>
<feature type="chain" id="PRO_0000195759" description="Xylose isomerase">
    <location>
        <begin position="1"/>
        <end position="394"/>
    </location>
</feature>
<feature type="active site" evidence="1">
    <location>
        <position position="54"/>
    </location>
</feature>
<feature type="active site" evidence="1">
    <location>
        <position position="57"/>
    </location>
</feature>
<feature type="binding site" evidence="1">
    <location>
        <position position="181"/>
    </location>
    <ligand>
        <name>Mg(2+)</name>
        <dbReference type="ChEBI" id="CHEBI:18420"/>
        <label>1</label>
    </ligand>
</feature>
<feature type="binding site" evidence="1">
    <location>
        <position position="217"/>
    </location>
    <ligand>
        <name>Mg(2+)</name>
        <dbReference type="ChEBI" id="CHEBI:18420"/>
        <label>1</label>
    </ligand>
</feature>
<feature type="binding site" evidence="1">
    <location>
        <position position="217"/>
    </location>
    <ligand>
        <name>Mg(2+)</name>
        <dbReference type="ChEBI" id="CHEBI:18420"/>
        <label>2</label>
    </ligand>
</feature>
<feature type="binding site" evidence="1">
    <location>
        <position position="220"/>
    </location>
    <ligand>
        <name>Mg(2+)</name>
        <dbReference type="ChEBI" id="CHEBI:18420"/>
        <label>2</label>
    </ligand>
</feature>
<feature type="binding site" evidence="1">
    <location>
        <position position="245"/>
    </location>
    <ligand>
        <name>Mg(2+)</name>
        <dbReference type="ChEBI" id="CHEBI:18420"/>
        <label>1</label>
    </ligand>
</feature>
<feature type="binding site" evidence="1">
    <location>
        <position position="255"/>
    </location>
    <ligand>
        <name>Mg(2+)</name>
        <dbReference type="ChEBI" id="CHEBI:18420"/>
        <label>2</label>
    </ligand>
</feature>
<feature type="binding site" evidence="1">
    <location>
        <position position="257"/>
    </location>
    <ligand>
        <name>Mg(2+)</name>
        <dbReference type="ChEBI" id="CHEBI:18420"/>
        <label>2</label>
    </ligand>
</feature>
<feature type="binding site" evidence="1">
    <location>
        <position position="292"/>
    </location>
    <ligand>
        <name>Mg(2+)</name>
        <dbReference type="ChEBI" id="CHEBI:18420"/>
        <label>1</label>
    </ligand>
</feature>
<protein>
    <recommendedName>
        <fullName>Xylose isomerase</fullName>
        <ecNumber>5.3.1.5</ecNumber>
    </recommendedName>
</protein>
<organism>
    <name type="scientific">Actinoplanes sp. (strain ATCC 31351 / 3876)</name>
    <name type="common">Ampullariella sp.</name>
    <dbReference type="NCBI Taxonomy" id="1872"/>
    <lineage>
        <taxon>Bacteria</taxon>
        <taxon>Bacillati</taxon>
        <taxon>Actinomycetota</taxon>
        <taxon>Actinomycetes</taxon>
        <taxon>Micromonosporales</taxon>
        <taxon>Micromonosporaceae</taxon>
        <taxon>Actinoplanes</taxon>
    </lineage>
</organism>
<keyword id="KW-0119">Carbohydrate metabolism</keyword>
<keyword id="KW-0963">Cytoplasm</keyword>
<keyword id="KW-0413">Isomerase</keyword>
<keyword id="KW-0460">Magnesium</keyword>
<keyword id="KW-0479">Metal-binding</keyword>
<keyword id="KW-0859">Xylose metabolism</keyword>
<comment type="catalytic activity">
    <reaction>
        <text>alpha-D-xylose = alpha-D-xylulofuranose</text>
        <dbReference type="Rhea" id="RHEA:22816"/>
        <dbReference type="ChEBI" id="CHEBI:28518"/>
        <dbReference type="ChEBI" id="CHEBI:188998"/>
        <dbReference type="EC" id="5.3.1.5"/>
    </reaction>
</comment>
<comment type="cofactor">
    <cofactor evidence="1">
        <name>Mg(2+)</name>
        <dbReference type="ChEBI" id="CHEBI:18420"/>
    </cofactor>
    <text evidence="1">Binds 2 magnesium ions per subunit.</text>
</comment>
<comment type="subunit">
    <text>Homotetramer.</text>
</comment>
<comment type="subcellular location">
    <subcellularLocation>
        <location>Cytoplasm</location>
    </subcellularLocation>
</comment>
<comment type="similarity">
    <text evidence="2">Belongs to the xylose isomerase family.</text>
</comment>
<dbReference type="EC" id="5.3.1.5"/>
<dbReference type="EMBL" id="M15050">
    <property type="protein sequence ID" value="AAA92578.1"/>
    <property type="molecule type" value="Genomic_DNA"/>
</dbReference>
<dbReference type="PIR" id="A27756">
    <property type="entry name" value="ISMAXA"/>
</dbReference>
<dbReference type="SMR" id="P10654"/>
<dbReference type="GO" id="GO:0005737">
    <property type="term" value="C:cytoplasm"/>
    <property type="evidence" value="ECO:0007669"/>
    <property type="project" value="UniProtKB-SubCell"/>
</dbReference>
<dbReference type="GO" id="GO:0000287">
    <property type="term" value="F:magnesium ion binding"/>
    <property type="evidence" value="ECO:0007669"/>
    <property type="project" value="UniProtKB-UniRule"/>
</dbReference>
<dbReference type="GO" id="GO:0009045">
    <property type="term" value="F:xylose isomerase activity"/>
    <property type="evidence" value="ECO:0007669"/>
    <property type="project" value="UniProtKB-UniRule"/>
</dbReference>
<dbReference type="GO" id="GO:0042732">
    <property type="term" value="P:D-xylose metabolic process"/>
    <property type="evidence" value="ECO:0007669"/>
    <property type="project" value="UniProtKB-UniRule"/>
</dbReference>
<dbReference type="Gene3D" id="3.20.20.150">
    <property type="entry name" value="Divalent-metal-dependent TIM barrel enzymes"/>
    <property type="match status" value="1"/>
</dbReference>
<dbReference type="HAMAP" id="MF_00455">
    <property type="entry name" value="Xylose_isom_A"/>
    <property type="match status" value="1"/>
</dbReference>
<dbReference type="InterPro" id="IPR036237">
    <property type="entry name" value="Xyl_isomerase-like_sf"/>
</dbReference>
<dbReference type="InterPro" id="IPR013022">
    <property type="entry name" value="Xyl_isomerase-like_TIM-brl"/>
</dbReference>
<dbReference type="InterPro" id="IPR013453">
    <property type="entry name" value="XylA_actinobac"/>
</dbReference>
<dbReference type="InterPro" id="IPR001998">
    <property type="entry name" value="Xylose_isomerase"/>
</dbReference>
<dbReference type="NCBIfam" id="TIGR02631">
    <property type="entry name" value="xylA_Arthro"/>
    <property type="match status" value="1"/>
</dbReference>
<dbReference type="PANTHER" id="PTHR48408">
    <property type="match status" value="1"/>
</dbReference>
<dbReference type="PANTHER" id="PTHR48408:SF1">
    <property type="entry name" value="XYLOSE ISOMERASE"/>
    <property type="match status" value="1"/>
</dbReference>
<dbReference type="Pfam" id="PF01261">
    <property type="entry name" value="AP_endonuc_2"/>
    <property type="match status" value="1"/>
</dbReference>
<dbReference type="PRINTS" id="PR00688">
    <property type="entry name" value="XYLOSISMRASE"/>
</dbReference>
<dbReference type="SUPFAM" id="SSF51658">
    <property type="entry name" value="Xylose isomerase-like"/>
    <property type="match status" value="1"/>
</dbReference>
<dbReference type="PROSITE" id="PS51415">
    <property type="entry name" value="XYLOSE_ISOMERASE"/>
    <property type="match status" value="1"/>
</dbReference>
<sequence>MSLQATPDDKFSFGLWTVGWQARDAFGDATRPVLDPIEAVHKLAEIGAYGVTFHDDDLVPFGADAATRDGIVAGFSKALDETGLIVPMVTTNLFTHPVFKDGGFTSNDRSVRRYAIRKVLRQMDLGAELGAKTLVLWGGREGAEYDSAKDVGAALDRYREALNLLAQYSEDQGYGLPFAIEPKPNEPRGDILLPTAGHAIAFVQELERPELFGINRETGHEQMSNLNFTQGIAQALWHKKLFHIDLNGQHGPKFDQDLVFGHGDLLNAFSLVDLLENGPDGGPAYDGPRHFDYKPSRTEDFDGVWESAKDNIRMYLLLKERAKAFRADPEVQAALAESKVDELRTPTLNPGETYADLLADRSAFEDYDADAVGAKGYGFVKLNQLAIDHLLGAR</sequence>
<evidence type="ECO:0000250" key="1"/>
<evidence type="ECO:0000305" key="2"/>
<gene>
    <name type="primary">xylA</name>
</gene>
<name>XYLA_ACTS3</name>
<proteinExistence type="inferred from homology"/>